<accession>A6TW06</accession>
<protein>
    <recommendedName>
        <fullName evidence="1">Phosphoglucosamine mutase</fullName>
        <ecNumber evidence="1">5.4.2.10</ecNumber>
    </recommendedName>
</protein>
<comment type="function">
    <text evidence="1">Catalyzes the conversion of glucosamine-6-phosphate to glucosamine-1-phosphate.</text>
</comment>
<comment type="catalytic activity">
    <reaction evidence="1">
        <text>alpha-D-glucosamine 1-phosphate = D-glucosamine 6-phosphate</text>
        <dbReference type="Rhea" id="RHEA:23424"/>
        <dbReference type="ChEBI" id="CHEBI:58516"/>
        <dbReference type="ChEBI" id="CHEBI:58725"/>
        <dbReference type="EC" id="5.4.2.10"/>
    </reaction>
</comment>
<comment type="cofactor">
    <cofactor evidence="1">
        <name>Mg(2+)</name>
        <dbReference type="ChEBI" id="CHEBI:18420"/>
    </cofactor>
    <text evidence="1">Binds 1 Mg(2+) ion per subunit.</text>
</comment>
<comment type="PTM">
    <text evidence="1">Activated by phosphorylation.</text>
</comment>
<comment type="similarity">
    <text evidence="1">Belongs to the phosphohexose mutase family.</text>
</comment>
<proteinExistence type="inferred from homology"/>
<gene>
    <name evidence="1" type="primary">glmM</name>
    <name type="ordered locus">Amet_4300</name>
</gene>
<evidence type="ECO:0000255" key="1">
    <source>
        <dbReference type="HAMAP-Rule" id="MF_01554"/>
    </source>
</evidence>
<dbReference type="EC" id="5.4.2.10" evidence="1"/>
<dbReference type="EMBL" id="CP000724">
    <property type="protein sequence ID" value="ABR50374.1"/>
    <property type="molecule type" value="Genomic_DNA"/>
</dbReference>
<dbReference type="RefSeq" id="WP_012065321.1">
    <property type="nucleotide sequence ID" value="NC_009633.1"/>
</dbReference>
<dbReference type="SMR" id="A6TW06"/>
<dbReference type="STRING" id="293826.Amet_4300"/>
<dbReference type="KEGG" id="amt:Amet_4300"/>
<dbReference type="eggNOG" id="COG1109">
    <property type="taxonomic scope" value="Bacteria"/>
</dbReference>
<dbReference type="HOGENOM" id="CLU_016950_7_0_9"/>
<dbReference type="OrthoDB" id="9806956at2"/>
<dbReference type="Proteomes" id="UP000001572">
    <property type="component" value="Chromosome"/>
</dbReference>
<dbReference type="GO" id="GO:0005829">
    <property type="term" value="C:cytosol"/>
    <property type="evidence" value="ECO:0007669"/>
    <property type="project" value="TreeGrafter"/>
</dbReference>
<dbReference type="GO" id="GO:0000287">
    <property type="term" value="F:magnesium ion binding"/>
    <property type="evidence" value="ECO:0007669"/>
    <property type="project" value="UniProtKB-UniRule"/>
</dbReference>
<dbReference type="GO" id="GO:0008966">
    <property type="term" value="F:phosphoglucosamine mutase activity"/>
    <property type="evidence" value="ECO:0007669"/>
    <property type="project" value="UniProtKB-UniRule"/>
</dbReference>
<dbReference type="GO" id="GO:0004615">
    <property type="term" value="F:phosphomannomutase activity"/>
    <property type="evidence" value="ECO:0007669"/>
    <property type="project" value="TreeGrafter"/>
</dbReference>
<dbReference type="GO" id="GO:0005975">
    <property type="term" value="P:carbohydrate metabolic process"/>
    <property type="evidence" value="ECO:0007669"/>
    <property type="project" value="InterPro"/>
</dbReference>
<dbReference type="GO" id="GO:0009252">
    <property type="term" value="P:peptidoglycan biosynthetic process"/>
    <property type="evidence" value="ECO:0007669"/>
    <property type="project" value="TreeGrafter"/>
</dbReference>
<dbReference type="GO" id="GO:0006048">
    <property type="term" value="P:UDP-N-acetylglucosamine biosynthetic process"/>
    <property type="evidence" value="ECO:0007669"/>
    <property type="project" value="TreeGrafter"/>
</dbReference>
<dbReference type="CDD" id="cd05802">
    <property type="entry name" value="GlmM"/>
    <property type="match status" value="1"/>
</dbReference>
<dbReference type="FunFam" id="3.30.310.50:FF:000001">
    <property type="entry name" value="Phosphoglucosamine mutase"/>
    <property type="match status" value="1"/>
</dbReference>
<dbReference type="FunFam" id="3.40.120.10:FF:000001">
    <property type="entry name" value="Phosphoglucosamine mutase"/>
    <property type="match status" value="1"/>
</dbReference>
<dbReference type="FunFam" id="3.40.120.10:FF:000002">
    <property type="entry name" value="Phosphoglucosamine mutase"/>
    <property type="match status" value="1"/>
</dbReference>
<dbReference type="Gene3D" id="3.40.120.10">
    <property type="entry name" value="Alpha-D-Glucose-1,6-Bisphosphate, subunit A, domain 3"/>
    <property type="match status" value="3"/>
</dbReference>
<dbReference type="Gene3D" id="3.30.310.50">
    <property type="entry name" value="Alpha-D-phosphohexomutase, C-terminal domain"/>
    <property type="match status" value="1"/>
</dbReference>
<dbReference type="HAMAP" id="MF_01554_B">
    <property type="entry name" value="GlmM_B"/>
    <property type="match status" value="1"/>
</dbReference>
<dbReference type="InterPro" id="IPR005844">
    <property type="entry name" value="A-D-PHexomutase_a/b/a-I"/>
</dbReference>
<dbReference type="InterPro" id="IPR016055">
    <property type="entry name" value="A-D-PHexomutase_a/b/a-I/II/III"/>
</dbReference>
<dbReference type="InterPro" id="IPR005845">
    <property type="entry name" value="A-D-PHexomutase_a/b/a-II"/>
</dbReference>
<dbReference type="InterPro" id="IPR005846">
    <property type="entry name" value="A-D-PHexomutase_a/b/a-III"/>
</dbReference>
<dbReference type="InterPro" id="IPR005843">
    <property type="entry name" value="A-D-PHexomutase_C"/>
</dbReference>
<dbReference type="InterPro" id="IPR036900">
    <property type="entry name" value="A-D-PHexomutase_C_sf"/>
</dbReference>
<dbReference type="InterPro" id="IPR016066">
    <property type="entry name" value="A-D-PHexomutase_CS"/>
</dbReference>
<dbReference type="InterPro" id="IPR005841">
    <property type="entry name" value="Alpha-D-phosphohexomutase_SF"/>
</dbReference>
<dbReference type="InterPro" id="IPR006352">
    <property type="entry name" value="GlmM_bact"/>
</dbReference>
<dbReference type="InterPro" id="IPR050060">
    <property type="entry name" value="Phosphoglucosamine_mutase"/>
</dbReference>
<dbReference type="NCBIfam" id="TIGR01455">
    <property type="entry name" value="glmM"/>
    <property type="match status" value="1"/>
</dbReference>
<dbReference type="NCBIfam" id="NF008139">
    <property type="entry name" value="PRK10887.1"/>
    <property type="match status" value="1"/>
</dbReference>
<dbReference type="PANTHER" id="PTHR42946:SF1">
    <property type="entry name" value="PHOSPHOGLUCOMUTASE (ALPHA-D-GLUCOSE-1,6-BISPHOSPHATE-DEPENDENT)"/>
    <property type="match status" value="1"/>
</dbReference>
<dbReference type="PANTHER" id="PTHR42946">
    <property type="entry name" value="PHOSPHOHEXOSE MUTASE"/>
    <property type="match status" value="1"/>
</dbReference>
<dbReference type="Pfam" id="PF02878">
    <property type="entry name" value="PGM_PMM_I"/>
    <property type="match status" value="1"/>
</dbReference>
<dbReference type="Pfam" id="PF02879">
    <property type="entry name" value="PGM_PMM_II"/>
    <property type="match status" value="1"/>
</dbReference>
<dbReference type="Pfam" id="PF02880">
    <property type="entry name" value="PGM_PMM_III"/>
    <property type="match status" value="1"/>
</dbReference>
<dbReference type="Pfam" id="PF00408">
    <property type="entry name" value="PGM_PMM_IV"/>
    <property type="match status" value="1"/>
</dbReference>
<dbReference type="PRINTS" id="PR00509">
    <property type="entry name" value="PGMPMM"/>
</dbReference>
<dbReference type="SUPFAM" id="SSF55957">
    <property type="entry name" value="Phosphoglucomutase, C-terminal domain"/>
    <property type="match status" value="1"/>
</dbReference>
<dbReference type="SUPFAM" id="SSF53738">
    <property type="entry name" value="Phosphoglucomutase, first 3 domains"/>
    <property type="match status" value="3"/>
</dbReference>
<dbReference type="PROSITE" id="PS00710">
    <property type="entry name" value="PGM_PMM"/>
    <property type="match status" value="1"/>
</dbReference>
<feature type="chain" id="PRO_1000068885" description="Phosphoglucosamine mutase">
    <location>
        <begin position="1"/>
        <end position="448"/>
    </location>
</feature>
<feature type="active site" description="Phosphoserine intermediate" evidence="1">
    <location>
        <position position="100"/>
    </location>
</feature>
<feature type="binding site" description="via phosphate group" evidence="1">
    <location>
        <position position="100"/>
    </location>
    <ligand>
        <name>Mg(2+)</name>
        <dbReference type="ChEBI" id="CHEBI:18420"/>
    </ligand>
</feature>
<feature type="binding site" evidence="1">
    <location>
        <position position="240"/>
    </location>
    <ligand>
        <name>Mg(2+)</name>
        <dbReference type="ChEBI" id="CHEBI:18420"/>
    </ligand>
</feature>
<feature type="binding site" evidence="1">
    <location>
        <position position="242"/>
    </location>
    <ligand>
        <name>Mg(2+)</name>
        <dbReference type="ChEBI" id="CHEBI:18420"/>
    </ligand>
</feature>
<feature type="binding site" evidence="1">
    <location>
        <position position="244"/>
    </location>
    <ligand>
        <name>Mg(2+)</name>
        <dbReference type="ChEBI" id="CHEBI:18420"/>
    </ligand>
</feature>
<feature type="modified residue" description="Phosphoserine" evidence="1">
    <location>
        <position position="100"/>
    </location>
</feature>
<organism>
    <name type="scientific">Alkaliphilus metalliredigens (strain QYMF)</name>
    <dbReference type="NCBI Taxonomy" id="293826"/>
    <lineage>
        <taxon>Bacteria</taxon>
        <taxon>Bacillati</taxon>
        <taxon>Bacillota</taxon>
        <taxon>Clostridia</taxon>
        <taxon>Peptostreptococcales</taxon>
        <taxon>Natronincolaceae</taxon>
        <taxon>Alkaliphilus</taxon>
    </lineage>
</organism>
<reference key="1">
    <citation type="journal article" date="2016" name="Genome Announc.">
        <title>Complete genome sequence of Alkaliphilus metalliredigens strain QYMF, an alkaliphilic and metal-reducing bacterium isolated from borax-contaminated leachate ponds.</title>
        <authorList>
            <person name="Hwang C."/>
            <person name="Copeland A."/>
            <person name="Lucas S."/>
            <person name="Lapidus A."/>
            <person name="Barry K."/>
            <person name="Detter J.C."/>
            <person name="Glavina Del Rio T."/>
            <person name="Hammon N."/>
            <person name="Israni S."/>
            <person name="Dalin E."/>
            <person name="Tice H."/>
            <person name="Pitluck S."/>
            <person name="Chertkov O."/>
            <person name="Brettin T."/>
            <person name="Bruce D."/>
            <person name="Han C."/>
            <person name="Schmutz J."/>
            <person name="Larimer F."/>
            <person name="Land M.L."/>
            <person name="Hauser L."/>
            <person name="Kyrpides N."/>
            <person name="Mikhailova N."/>
            <person name="Ye Q."/>
            <person name="Zhou J."/>
            <person name="Richardson P."/>
            <person name="Fields M.W."/>
        </authorList>
    </citation>
    <scope>NUCLEOTIDE SEQUENCE [LARGE SCALE GENOMIC DNA]</scope>
    <source>
        <strain>QYMF</strain>
    </source>
</reference>
<name>GLMM_ALKMQ</name>
<sequence>MGKLFGTDGIRGIANEELTPELAYQLGRVGAYVLIKGAKDAKVVIGRDTRISGDLLTSAITSGFLSMGVDVIDLGVIPTPAVAYLTRELQGNCGIVISASHNPAEYNGIKFFNHQGYKLPDEIEEQIETYILNNEEIENRVTGAAVGKRIELKEATRLYMDYLKTTIECRFEGLKIAMDLGNGAVYEAAPQLLKELGAEVIIVNDQPDGMNINEGCGSTHPEVVQRLVKENKADVGLSFDGDADRLIAVDNTGAIVDGDSMMAICGTNLNEKHILNKNTIVATVMSNIGLDLAMKEQGCQVVKTKVGDRYVLEEMIKEGYTLGGEQSGHIIFLKYNTTGDGLLTALQLIATVKESGKTLSELSGMMTSYPQVLVNAKVKNENKLAYMEDEVIMGEIKMIEEKMNGVGRVLIRPSGTEPLVRVMLEGQEQAELEVLAHGLAQLIESKLG</sequence>
<keyword id="KW-0413">Isomerase</keyword>
<keyword id="KW-0460">Magnesium</keyword>
<keyword id="KW-0479">Metal-binding</keyword>
<keyword id="KW-0597">Phosphoprotein</keyword>
<keyword id="KW-1185">Reference proteome</keyword>